<sequence>MKVTFEQLKAAFNRVLISRGVDNETADACAEMFARTTESGVYSHGVNRFPRFIQQLENGDIIPDAQPKRITSLGAIEQWDAQRSIGNLTAKKMMDRAIELAADHGIGLVALRNANHWMRGGSYGWQAAEKGYIGICWTNSIAVMPPWGAKECRIGTNPLIVAIPSTPITMVDMSMSMFSYGMLEVNRLAGRQLPVDGGFDDEGNLTKEPGVIEKNRRILPMGYWKGSGMSIVLDMIATLLSDGASVAEVTEDNSDEYGISQIFIAIEVDKLIDGPTRDAKLQRIMDYVTSAERADENQAIRLPGHEFTTLLAENRRNGITVDDSVWAKIQAL</sequence>
<organism>
    <name type="scientific">Escherichia coli (strain UTI89 / UPEC)</name>
    <dbReference type="NCBI Taxonomy" id="364106"/>
    <lineage>
        <taxon>Bacteria</taxon>
        <taxon>Pseudomonadati</taxon>
        <taxon>Pseudomonadota</taxon>
        <taxon>Gammaproteobacteria</taxon>
        <taxon>Enterobacterales</taxon>
        <taxon>Enterobacteriaceae</taxon>
        <taxon>Escherichia</taxon>
    </lineage>
</organism>
<keyword id="KW-0963">Cytoplasm</keyword>
<keyword id="KW-0520">NAD</keyword>
<keyword id="KW-0560">Oxidoreductase</keyword>
<dbReference type="EC" id="1.1.1.130" evidence="1"/>
<dbReference type="EMBL" id="CP000243">
    <property type="protein sequence ID" value="ABE09545.1"/>
    <property type="molecule type" value="Genomic_DNA"/>
</dbReference>
<dbReference type="SMR" id="Q1R519"/>
<dbReference type="KEGG" id="eci:UTI89_C4117"/>
<dbReference type="HOGENOM" id="CLU_040452_4_0_6"/>
<dbReference type="Proteomes" id="UP000001952">
    <property type="component" value="Chromosome"/>
</dbReference>
<dbReference type="GO" id="GO:0005737">
    <property type="term" value="C:cytoplasm"/>
    <property type="evidence" value="ECO:0007669"/>
    <property type="project" value="UniProtKB-SubCell"/>
</dbReference>
<dbReference type="GO" id="GO:0047559">
    <property type="term" value="F:3-dehydro-L-gulonate 2-dehydrogenase activity"/>
    <property type="evidence" value="ECO:0007669"/>
    <property type="project" value="UniProtKB-UniRule"/>
</dbReference>
<dbReference type="GO" id="GO:0070403">
    <property type="term" value="F:NAD+ binding"/>
    <property type="evidence" value="ECO:0007669"/>
    <property type="project" value="InterPro"/>
</dbReference>
<dbReference type="Gene3D" id="1.10.1530.10">
    <property type="match status" value="1"/>
</dbReference>
<dbReference type="Gene3D" id="3.30.1370.60">
    <property type="entry name" value="Hypothetical oxidoreductase yiak, domain 2"/>
    <property type="match status" value="1"/>
</dbReference>
<dbReference type="Gene3D" id="3.30.60.50">
    <property type="entry name" value="Hypothetical oxidoreductase yiak, domain 3"/>
    <property type="match status" value="1"/>
</dbReference>
<dbReference type="HAMAP" id="MF_00820">
    <property type="entry name" value="Diketo_gul_reduc"/>
    <property type="match status" value="1"/>
</dbReference>
<dbReference type="InterPro" id="IPR023689">
    <property type="entry name" value="Diketo_gul_Rdtase"/>
</dbReference>
<dbReference type="InterPro" id="IPR043144">
    <property type="entry name" value="Mal/L-sulf/L-lact_DH-like_ah"/>
</dbReference>
<dbReference type="InterPro" id="IPR043143">
    <property type="entry name" value="Mal/L-sulf/L-lact_DH-like_NADP"/>
</dbReference>
<dbReference type="InterPro" id="IPR036111">
    <property type="entry name" value="Mal/L-sulfo/L-lacto_DH-like_sf"/>
</dbReference>
<dbReference type="InterPro" id="IPR003767">
    <property type="entry name" value="Malate/L-lactate_DH-like"/>
</dbReference>
<dbReference type="NCBIfam" id="NF009750">
    <property type="entry name" value="PRK13260.1"/>
    <property type="match status" value="1"/>
</dbReference>
<dbReference type="PANTHER" id="PTHR11091:SF3">
    <property type="entry name" value="2,3-DIKETO-L-GULONATE REDUCTASE"/>
    <property type="match status" value="1"/>
</dbReference>
<dbReference type="PANTHER" id="PTHR11091">
    <property type="entry name" value="OXIDOREDUCTASE-RELATED"/>
    <property type="match status" value="1"/>
</dbReference>
<dbReference type="Pfam" id="PF02615">
    <property type="entry name" value="Ldh_2"/>
    <property type="match status" value="1"/>
</dbReference>
<dbReference type="SUPFAM" id="SSF89733">
    <property type="entry name" value="L-sulfolactate dehydrogenase-like"/>
    <property type="match status" value="1"/>
</dbReference>
<comment type="function">
    <text evidence="1">Catalyzes the reduction of 2,3-diketo-L-gulonate in the presence of NADH, to form 3-keto-L-gulonate.</text>
</comment>
<comment type="catalytic activity">
    <reaction evidence="1">
        <text>3-dehydro-L-gulonate + NAD(+) = 2,3-dioxo-L-gulonate + NADH + H(+)</text>
        <dbReference type="Rhea" id="RHEA:21924"/>
        <dbReference type="ChEBI" id="CHEBI:15378"/>
        <dbReference type="ChEBI" id="CHEBI:57441"/>
        <dbReference type="ChEBI" id="CHEBI:57540"/>
        <dbReference type="ChEBI" id="CHEBI:57655"/>
        <dbReference type="ChEBI" id="CHEBI:57945"/>
        <dbReference type="EC" id="1.1.1.130"/>
    </reaction>
</comment>
<comment type="catalytic activity">
    <reaction evidence="1">
        <text>3-dehydro-L-gulonate + NADP(+) = 2,3-dioxo-L-gulonate + NADPH + H(+)</text>
        <dbReference type="Rhea" id="RHEA:21928"/>
        <dbReference type="ChEBI" id="CHEBI:15378"/>
        <dbReference type="ChEBI" id="CHEBI:57441"/>
        <dbReference type="ChEBI" id="CHEBI:57655"/>
        <dbReference type="ChEBI" id="CHEBI:57783"/>
        <dbReference type="ChEBI" id="CHEBI:58349"/>
        <dbReference type="EC" id="1.1.1.130"/>
    </reaction>
</comment>
<comment type="subunit">
    <text evidence="1">Homodimer.</text>
</comment>
<comment type="subcellular location">
    <subcellularLocation>
        <location evidence="1">Cytoplasm</location>
    </subcellularLocation>
</comment>
<comment type="similarity">
    <text evidence="1">Belongs to the LDH2/MDH2 oxidoreductase family. DlgD subfamily.</text>
</comment>
<feature type="chain" id="PRO_1000062443" description="2,3-diketo-L-gulonate reductase">
    <location>
        <begin position="1"/>
        <end position="332"/>
    </location>
</feature>
<feature type="active site" description="Proton donor" evidence="1">
    <location>
        <position position="44"/>
    </location>
</feature>
<feature type="binding site" evidence="1">
    <location>
        <begin position="168"/>
        <end position="174"/>
    </location>
    <ligand>
        <name>NAD(+)</name>
        <dbReference type="ChEBI" id="CHEBI:57540"/>
    </ligand>
</feature>
<feature type="binding site" evidence="1">
    <location>
        <begin position="224"/>
        <end position="225"/>
    </location>
    <ligand>
        <name>NAD(+)</name>
        <dbReference type="ChEBI" id="CHEBI:57540"/>
    </ligand>
</feature>
<feature type="binding site" evidence="1">
    <location>
        <begin position="304"/>
        <end position="306"/>
    </location>
    <ligand>
        <name>NAD(+)</name>
        <dbReference type="ChEBI" id="CHEBI:57540"/>
    </ligand>
</feature>
<gene>
    <name evidence="1" type="primary">dlgD</name>
    <name type="ordered locus">UTI89_C4117</name>
</gene>
<accession>Q1R519</accession>
<reference key="1">
    <citation type="journal article" date="2006" name="Proc. Natl. Acad. Sci. U.S.A.">
        <title>Identification of genes subject to positive selection in uropathogenic strains of Escherichia coli: a comparative genomics approach.</title>
        <authorList>
            <person name="Chen S.L."/>
            <person name="Hung C.-S."/>
            <person name="Xu J."/>
            <person name="Reigstad C.S."/>
            <person name="Magrini V."/>
            <person name="Sabo A."/>
            <person name="Blasiar D."/>
            <person name="Bieri T."/>
            <person name="Meyer R.R."/>
            <person name="Ozersky P."/>
            <person name="Armstrong J.R."/>
            <person name="Fulton R.S."/>
            <person name="Latreille J.P."/>
            <person name="Spieth J."/>
            <person name="Hooton T.M."/>
            <person name="Mardis E.R."/>
            <person name="Hultgren S.J."/>
            <person name="Gordon J.I."/>
        </authorList>
    </citation>
    <scope>NUCLEOTIDE SEQUENCE [LARGE SCALE GENOMIC DNA]</scope>
    <source>
        <strain>UTI89 / UPEC</strain>
    </source>
</reference>
<protein>
    <recommendedName>
        <fullName evidence="1">2,3-diketo-L-gulonate reductase</fullName>
        <shortName evidence="1">2,3-DKG reductase</shortName>
        <ecNumber evidence="1">1.1.1.130</ecNumber>
    </recommendedName>
    <alternativeName>
        <fullName evidence="1">3-dehydro-L-gulonate 2-dehydrogenase</fullName>
    </alternativeName>
</protein>
<evidence type="ECO:0000255" key="1">
    <source>
        <dbReference type="HAMAP-Rule" id="MF_00820"/>
    </source>
</evidence>
<name>DLGD_ECOUT</name>
<proteinExistence type="inferred from homology"/>